<organism>
    <name type="scientific">Salmonella paratyphi C (strain RKS4594)</name>
    <dbReference type="NCBI Taxonomy" id="476213"/>
    <lineage>
        <taxon>Bacteria</taxon>
        <taxon>Pseudomonadati</taxon>
        <taxon>Pseudomonadota</taxon>
        <taxon>Gammaproteobacteria</taxon>
        <taxon>Enterobacterales</taxon>
        <taxon>Enterobacteriaceae</taxon>
        <taxon>Salmonella</taxon>
    </lineage>
</organism>
<sequence length="228" mass="25200">MQKLKQQVFDANMDLPRYGLVTFTWGNVSAIDRERGLVVIKPSGVAYETMKVDDMVVVDMDGKVVEGGYRPSSDTATHLALYQRYPSLGGVVHTHSTHATAWAQAGMAIPALGTTHADYFFGDIPCTRALSEEEVQGEYELNTGKVIIETLGEVEPLHTPGIVVYQHGPFAWGKDAHDAVHNAVVMEEVAKMAWIARGINPALNPIDDYLMNKHFMRKHGPNAYYGQK</sequence>
<feature type="chain" id="PRO_1000188852" description="L-ribulose-5-phosphate 4-epimerase UlaF">
    <location>
        <begin position="1"/>
        <end position="228"/>
    </location>
</feature>
<feature type="active site" description="Proton donor/acceptor" evidence="1">
    <location>
        <position position="118"/>
    </location>
</feature>
<feature type="active site" description="Proton donor/acceptor" evidence="1">
    <location>
        <position position="225"/>
    </location>
</feature>
<feature type="binding site" evidence="1">
    <location>
        <begin position="26"/>
        <end position="27"/>
    </location>
    <ligand>
        <name>substrate</name>
    </ligand>
</feature>
<feature type="binding site" evidence="1">
    <location>
        <begin position="43"/>
        <end position="44"/>
    </location>
    <ligand>
        <name>substrate</name>
    </ligand>
</feature>
<feature type="binding site" evidence="1">
    <location>
        <begin position="72"/>
        <end position="73"/>
    </location>
    <ligand>
        <name>substrate</name>
    </ligand>
</feature>
<feature type="binding site" evidence="1">
    <location>
        <position position="74"/>
    </location>
    <ligand>
        <name>Zn(2+)</name>
        <dbReference type="ChEBI" id="CHEBI:29105"/>
    </ligand>
</feature>
<feature type="binding site" evidence="1">
    <location>
        <position position="93"/>
    </location>
    <ligand>
        <name>Zn(2+)</name>
        <dbReference type="ChEBI" id="CHEBI:29105"/>
    </ligand>
</feature>
<feature type="binding site" evidence="1">
    <location>
        <position position="95"/>
    </location>
    <ligand>
        <name>Zn(2+)</name>
        <dbReference type="ChEBI" id="CHEBI:29105"/>
    </ligand>
</feature>
<feature type="binding site" evidence="1">
    <location>
        <position position="167"/>
    </location>
    <ligand>
        <name>Zn(2+)</name>
        <dbReference type="ChEBI" id="CHEBI:29105"/>
    </ligand>
</feature>
<evidence type="ECO:0000255" key="1">
    <source>
        <dbReference type="HAMAP-Rule" id="MF_01952"/>
    </source>
</evidence>
<dbReference type="EC" id="5.1.3.4" evidence="1"/>
<dbReference type="EMBL" id="CP000857">
    <property type="protein sequence ID" value="ACN48585.1"/>
    <property type="molecule type" value="Genomic_DNA"/>
</dbReference>
<dbReference type="RefSeq" id="WP_001170767.1">
    <property type="nucleotide sequence ID" value="NC_012125.1"/>
</dbReference>
<dbReference type="SMR" id="C0Q6F5"/>
<dbReference type="KEGG" id="sei:SPC_4535"/>
<dbReference type="HOGENOM" id="CLU_006033_5_0_6"/>
<dbReference type="UniPathway" id="UPA00263">
    <property type="reaction ID" value="UER00380"/>
</dbReference>
<dbReference type="Proteomes" id="UP000001599">
    <property type="component" value="Chromosome"/>
</dbReference>
<dbReference type="GO" id="GO:0005829">
    <property type="term" value="C:cytosol"/>
    <property type="evidence" value="ECO:0007669"/>
    <property type="project" value="TreeGrafter"/>
</dbReference>
<dbReference type="GO" id="GO:0016832">
    <property type="term" value="F:aldehyde-lyase activity"/>
    <property type="evidence" value="ECO:0007669"/>
    <property type="project" value="TreeGrafter"/>
</dbReference>
<dbReference type="GO" id="GO:0008742">
    <property type="term" value="F:L-ribulose-phosphate 4-epimerase activity"/>
    <property type="evidence" value="ECO:0007669"/>
    <property type="project" value="UniProtKB-UniRule"/>
</dbReference>
<dbReference type="GO" id="GO:0008270">
    <property type="term" value="F:zinc ion binding"/>
    <property type="evidence" value="ECO:0007669"/>
    <property type="project" value="UniProtKB-UniRule"/>
</dbReference>
<dbReference type="GO" id="GO:0019854">
    <property type="term" value="P:L-ascorbic acid catabolic process"/>
    <property type="evidence" value="ECO:0007669"/>
    <property type="project" value="UniProtKB-UniRule"/>
</dbReference>
<dbReference type="GO" id="GO:0019323">
    <property type="term" value="P:pentose catabolic process"/>
    <property type="evidence" value="ECO:0007669"/>
    <property type="project" value="TreeGrafter"/>
</dbReference>
<dbReference type="CDD" id="cd00398">
    <property type="entry name" value="Aldolase_II"/>
    <property type="match status" value="1"/>
</dbReference>
<dbReference type="FunFam" id="3.40.225.10:FF:000001">
    <property type="entry name" value="L-ribulose-5-phosphate 4-epimerase UlaF"/>
    <property type="match status" value="1"/>
</dbReference>
<dbReference type="Gene3D" id="3.40.225.10">
    <property type="entry name" value="Class II aldolase/adducin N-terminal domain"/>
    <property type="match status" value="1"/>
</dbReference>
<dbReference type="HAMAP" id="MF_01952">
    <property type="entry name" value="UlaF"/>
    <property type="match status" value="1"/>
</dbReference>
<dbReference type="InterPro" id="IPR050197">
    <property type="entry name" value="Aldolase_class_II_sugar_metab"/>
</dbReference>
<dbReference type="InterPro" id="IPR001303">
    <property type="entry name" value="Aldolase_II/adducin_N"/>
</dbReference>
<dbReference type="InterPro" id="IPR036409">
    <property type="entry name" value="Aldolase_II/adducin_N_sf"/>
</dbReference>
<dbReference type="InterPro" id="IPR023499">
    <property type="entry name" value="UlaF"/>
</dbReference>
<dbReference type="NCBIfam" id="NF006047">
    <property type="entry name" value="PRK08193.1"/>
    <property type="match status" value="1"/>
</dbReference>
<dbReference type="NCBIfam" id="NF009003">
    <property type="entry name" value="PRK12348.1"/>
    <property type="match status" value="1"/>
</dbReference>
<dbReference type="PANTHER" id="PTHR22789">
    <property type="entry name" value="FUCULOSE PHOSPHATE ALDOLASE"/>
    <property type="match status" value="1"/>
</dbReference>
<dbReference type="PANTHER" id="PTHR22789:SF9">
    <property type="entry name" value="L-RIBULOSE-5-PHOSPHATE 4-EPIMERASE ULAF"/>
    <property type="match status" value="1"/>
</dbReference>
<dbReference type="Pfam" id="PF00596">
    <property type="entry name" value="Aldolase_II"/>
    <property type="match status" value="1"/>
</dbReference>
<dbReference type="SMART" id="SM01007">
    <property type="entry name" value="Aldolase_II"/>
    <property type="match status" value="1"/>
</dbReference>
<dbReference type="SUPFAM" id="SSF53639">
    <property type="entry name" value="AraD/HMP-PK domain-like"/>
    <property type="match status" value="1"/>
</dbReference>
<reference key="1">
    <citation type="journal article" date="2009" name="PLoS ONE">
        <title>Salmonella paratyphi C: genetic divergence from Salmonella choleraesuis and pathogenic convergence with Salmonella typhi.</title>
        <authorList>
            <person name="Liu W.-Q."/>
            <person name="Feng Y."/>
            <person name="Wang Y."/>
            <person name="Zou Q.-H."/>
            <person name="Chen F."/>
            <person name="Guo J.-T."/>
            <person name="Peng Y.-H."/>
            <person name="Jin Y."/>
            <person name="Li Y.-G."/>
            <person name="Hu S.-N."/>
            <person name="Johnston R.N."/>
            <person name="Liu G.-R."/>
            <person name="Liu S.-L."/>
        </authorList>
    </citation>
    <scope>NUCLEOTIDE SEQUENCE [LARGE SCALE GENOMIC DNA]</scope>
    <source>
        <strain>RKS4594</strain>
    </source>
</reference>
<gene>
    <name evidence="1" type="primary">ulaF</name>
    <name type="ordered locus">SPC_4535</name>
</gene>
<name>ULAF_SALPC</name>
<protein>
    <recommendedName>
        <fullName evidence="1">L-ribulose-5-phosphate 4-epimerase UlaF</fullName>
        <ecNumber evidence="1">5.1.3.4</ecNumber>
    </recommendedName>
    <alternativeName>
        <fullName evidence="1">L-ascorbate utilization protein F</fullName>
    </alternativeName>
    <alternativeName>
        <fullName evidence="1">Phosphoribulose isomerase</fullName>
    </alternativeName>
</protein>
<comment type="function">
    <text evidence="1">Catalyzes the isomerization of L-ribulose 5-phosphate to D-xylulose 5-phosphate. Is involved in the anaerobic L-ascorbate utilization.</text>
</comment>
<comment type="catalytic activity">
    <reaction evidence="1">
        <text>L-ribulose 5-phosphate = D-xylulose 5-phosphate</text>
        <dbReference type="Rhea" id="RHEA:22368"/>
        <dbReference type="ChEBI" id="CHEBI:57737"/>
        <dbReference type="ChEBI" id="CHEBI:58226"/>
        <dbReference type="EC" id="5.1.3.4"/>
    </reaction>
</comment>
<comment type="cofactor">
    <cofactor evidence="1">
        <name>Zn(2+)</name>
        <dbReference type="ChEBI" id="CHEBI:29105"/>
    </cofactor>
    <text evidence="1">Binds 1 zinc ion per subunit.</text>
</comment>
<comment type="pathway">
    <text evidence="1">Cofactor degradation; L-ascorbate degradation; D-xylulose 5-phosphate from L-ascorbate: step 4/4.</text>
</comment>
<comment type="induction">
    <text evidence="1">Induced by L-ascorbate. Repressed by UlaR.</text>
</comment>
<comment type="similarity">
    <text evidence="1">Belongs to the aldolase class II family. AraD/FucA subfamily.</text>
</comment>
<accession>C0Q6F5</accession>
<keyword id="KW-0119">Carbohydrate metabolism</keyword>
<keyword id="KW-0413">Isomerase</keyword>
<keyword id="KW-0479">Metal-binding</keyword>
<keyword id="KW-0862">Zinc</keyword>
<proteinExistence type="inferred from homology"/>